<keyword id="KW-0997">Cell inner membrane</keyword>
<keyword id="KW-1003">Cell membrane</keyword>
<keyword id="KW-0472">Membrane</keyword>
<keyword id="KW-0653">Protein transport</keyword>
<keyword id="KW-1185">Reference proteome</keyword>
<keyword id="KW-0811">Translocation</keyword>
<keyword id="KW-0812">Transmembrane</keyword>
<keyword id="KW-1133">Transmembrane helix</keyword>
<keyword id="KW-0813">Transport</keyword>
<sequence>MGSFSLTHWIIVLIIVVLIFGTKKLRNVGKDLGGAVHDFKQGLNEGTDGKEAQKDDVIEHKKDEDKA</sequence>
<reference key="1">
    <citation type="submission" date="2003-03" db="EMBL/GenBank/DDBJ databases">
        <title>The complete genome sequence of Neisseria gonorrhoeae.</title>
        <authorList>
            <person name="Lewis L.A."/>
            <person name="Gillaspy A.F."/>
            <person name="McLaughlin R.E."/>
            <person name="Gipson M."/>
            <person name="Ducey T.F."/>
            <person name="Ownbey T."/>
            <person name="Hartman K."/>
            <person name="Nydick C."/>
            <person name="Carson M.B."/>
            <person name="Vaughn J."/>
            <person name="Thomson C."/>
            <person name="Song L."/>
            <person name="Lin S."/>
            <person name="Yuan X."/>
            <person name="Najar F."/>
            <person name="Zhan M."/>
            <person name="Ren Q."/>
            <person name="Zhu H."/>
            <person name="Qi S."/>
            <person name="Kenton S.M."/>
            <person name="Lai H."/>
            <person name="White J.D."/>
            <person name="Clifton S."/>
            <person name="Roe B.A."/>
            <person name="Dyer D.W."/>
        </authorList>
    </citation>
    <scope>NUCLEOTIDE SEQUENCE [LARGE SCALE GENOMIC DNA]</scope>
    <source>
        <strain>ATCC 700825 / FA 1090</strain>
    </source>
</reference>
<protein>
    <recommendedName>
        <fullName evidence="1">Sec-independent protein translocase protein TatA</fullName>
    </recommendedName>
</protein>
<organism>
    <name type="scientific">Neisseria gonorrhoeae (strain ATCC 700825 / FA 1090)</name>
    <dbReference type="NCBI Taxonomy" id="242231"/>
    <lineage>
        <taxon>Bacteria</taxon>
        <taxon>Pseudomonadati</taxon>
        <taxon>Pseudomonadota</taxon>
        <taxon>Betaproteobacteria</taxon>
        <taxon>Neisseriales</taxon>
        <taxon>Neisseriaceae</taxon>
        <taxon>Neisseria</taxon>
    </lineage>
</organism>
<comment type="function">
    <text evidence="1">Part of the twin-arginine translocation (Tat) system that transports large folded proteins containing a characteristic twin-arginine motif in their signal peptide across membranes. TatA could form the protein-conducting channel of the Tat system.</text>
</comment>
<comment type="subunit">
    <text evidence="1">The Tat system comprises two distinct complexes: a TatABC complex, containing multiple copies of TatA, TatB and TatC subunits, and a separate TatA complex, containing only TatA subunits. Substrates initially bind to the TatABC complex, which probably triggers association of the separate TatA complex to form the active translocon.</text>
</comment>
<comment type="subcellular location">
    <subcellularLocation>
        <location evidence="1">Cell inner membrane</location>
        <topology evidence="1">Single-pass membrane protein</topology>
    </subcellularLocation>
</comment>
<comment type="similarity">
    <text evidence="1">Belongs to the TatA/E family.</text>
</comment>
<evidence type="ECO:0000255" key="1">
    <source>
        <dbReference type="HAMAP-Rule" id="MF_00236"/>
    </source>
</evidence>
<evidence type="ECO:0000256" key="2">
    <source>
        <dbReference type="SAM" id="MobiDB-lite"/>
    </source>
</evidence>
<dbReference type="EMBL" id="AE004969">
    <property type="protein sequence ID" value="AAW88938.1"/>
    <property type="molecule type" value="Genomic_DNA"/>
</dbReference>
<dbReference type="RefSeq" id="WP_002214303.1">
    <property type="nucleotide sequence ID" value="NC_002946.2"/>
</dbReference>
<dbReference type="RefSeq" id="YP_207350.1">
    <property type="nucleotide sequence ID" value="NC_002946.2"/>
</dbReference>
<dbReference type="SMR" id="Q5FA49"/>
<dbReference type="STRING" id="242231.NGO_0183"/>
<dbReference type="GeneID" id="93386569"/>
<dbReference type="KEGG" id="ngo:NGO_0183"/>
<dbReference type="PATRIC" id="fig|242231.10.peg.229"/>
<dbReference type="HOGENOM" id="CLU_086034_5_3_4"/>
<dbReference type="Proteomes" id="UP000000535">
    <property type="component" value="Chromosome"/>
</dbReference>
<dbReference type="GO" id="GO:0033281">
    <property type="term" value="C:TAT protein transport complex"/>
    <property type="evidence" value="ECO:0007669"/>
    <property type="project" value="UniProtKB-UniRule"/>
</dbReference>
<dbReference type="GO" id="GO:0008320">
    <property type="term" value="F:protein transmembrane transporter activity"/>
    <property type="evidence" value="ECO:0007669"/>
    <property type="project" value="UniProtKB-UniRule"/>
</dbReference>
<dbReference type="GO" id="GO:0043953">
    <property type="term" value="P:protein transport by the Tat complex"/>
    <property type="evidence" value="ECO:0007669"/>
    <property type="project" value="UniProtKB-UniRule"/>
</dbReference>
<dbReference type="Gene3D" id="1.20.5.3310">
    <property type="match status" value="1"/>
</dbReference>
<dbReference type="HAMAP" id="MF_00236">
    <property type="entry name" value="TatA_E"/>
    <property type="match status" value="1"/>
</dbReference>
<dbReference type="InterPro" id="IPR003369">
    <property type="entry name" value="TatA/B/E"/>
</dbReference>
<dbReference type="InterPro" id="IPR006312">
    <property type="entry name" value="TatA/E"/>
</dbReference>
<dbReference type="NCBIfam" id="NF002813">
    <property type="entry name" value="PRK02958.1"/>
    <property type="match status" value="1"/>
</dbReference>
<dbReference type="NCBIfam" id="TIGR01411">
    <property type="entry name" value="tatAE"/>
    <property type="match status" value="1"/>
</dbReference>
<dbReference type="PANTHER" id="PTHR42982">
    <property type="entry name" value="SEC-INDEPENDENT PROTEIN TRANSLOCASE PROTEIN TATA"/>
    <property type="match status" value="1"/>
</dbReference>
<dbReference type="PANTHER" id="PTHR42982:SF1">
    <property type="entry name" value="SEC-INDEPENDENT PROTEIN TRANSLOCASE PROTEIN TATA"/>
    <property type="match status" value="1"/>
</dbReference>
<dbReference type="Pfam" id="PF02416">
    <property type="entry name" value="TatA_B_E"/>
    <property type="match status" value="1"/>
</dbReference>
<gene>
    <name evidence="1" type="primary">tatA</name>
    <name type="ordered locus">NGO_0183</name>
</gene>
<proteinExistence type="inferred from homology"/>
<feature type="chain" id="PRO_1000044408" description="Sec-independent protein translocase protein TatA">
    <location>
        <begin position="1"/>
        <end position="67"/>
    </location>
</feature>
<feature type="transmembrane region" description="Helical" evidence="1">
    <location>
        <begin position="1"/>
        <end position="21"/>
    </location>
</feature>
<feature type="region of interest" description="Disordered" evidence="2">
    <location>
        <begin position="43"/>
        <end position="67"/>
    </location>
</feature>
<feature type="compositionally biased region" description="Basic and acidic residues" evidence="2">
    <location>
        <begin position="47"/>
        <end position="67"/>
    </location>
</feature>
<name>TATA_NEIG1</name>
<accession>Q5FA49</accession>